<accession>P45410</accession>
<proteinExistence type="predicted"/>
<evidence type="ECO:0000255" key="1">
    <source>
        <dbReference type="PROSITE-ProRule" id="PRU00532"/>
    </source>
</evidence>
<gene>
    <name type="primary">citC</name>
</gene>
<comment type="function">
    <text>Acetylation of prosthetic group (2-(5''-phosphoribosyl)-3'-dephosphocoenzyme-A) of the gamma subunit of citrate lyase.</text>
</comment>
<comment type="catalytic activity">
    <reaction>
        <text>holo-[citrate lyase ACP] + acetate + ATP = acetyl-[citrate lyase ACP] + AMP + diphosphate</text>
        <dbReference type="Rhea" id="RHEA:23788"/>
        <dbReference type="Rhea" id="RHEA-COMP:10158"/>
        <dbReference type="Rhea" id="RHEA-COMP:13710"/>
        <dbReference type="ChEBI" id="CHEBI:30089"/>
        <dbReference type="ChEBI" id="CHEBI:30616"/>
        <dbReference type="ChEBI" id="CHEBI:33019"/>
        <dbReference type="ChEBI" id="CHEBI:82683"/>
        <dbReference type="ChEBI" id="CHEBI:137976"/>
        <dbReference type="ChEBI" id="CHEBI:456215"/>
        <dbReference type="EC" id="6.2.1.22"/>
    </reaction>
</comment>
<keyword id="KW-0067">ATP-binding</keyword>
<keyword id="KW-0436">Ligase</keyword>
<keyword id="KW-0547">Nucleotide-binding</keyword>
<organism>
    <name type="scientific">Klebsiella pneumoniae</name>
    <dbReference type="NCBI Taxonomy" id="573"/>
    <lineage>
        <taxon>Bacteria</taxon>
        <taxon>Pseudomonadati</taxon>
        <taxon>Pseudomonadota</taxon>
        <taxon>Gammaproteobacteria</taxon>
        <taxon>Enterobacterales</taxon>
        <taxon>Enterobacteriaceae</taxon>
        <taxon>Klebsiella/Raoultella group</taxon>
        <taxon>Klebsiella</taxon>
        <taxon>Klebsiella pneumoniae complex</taxon>
    </lineage>
</organism>
<sequence length="342" mass="38477">MTLILKRVQLLKDKPRREAIDRFLRQHQLSLEADCEMAIIAEYQQRLVGCGAIAGNVLKCIAIDPSLQGEGLSLKLLTELLTLAYELGRSELFLFTKPCNAALFSGAGFWPIAQAGDRAVLMENSRERLTRYCRQLAMYRQPGRKIGAIVMNANPFTLGHRWLVEQAASQCDWLHLFVVKEDASCFSYHDRFKLIEQGITGIDKVTLHPGSAYLISRATFPGYFLKEQGVVDDCHSQIDLQLFRERLAPALQITHRFVGTEPLCPLTRNYNQRMKSLLEAPGDAPPIEVVELARIEKNGGPVSASRVRELYRQRNWQAVAALVPPGTLSFLMQLAESEHQTA</sequence>
<feature type="chain" id="PRO_0000089772" description="[Citrate [pro-3S]-lyase] ligase">
    <location>
        <begin position="1"/>
        <end position="342"/>
    </location>
</feature>
<feature type="domain" description="N-acetyltransferase" evidence="1">
    <location>
        <begin position="1"/>
        <end position="127"/>
    </location>
</feature>
<dbReference type="EC" id="6.2.1.22"/>
<dbReference type="EMBL" id="X79817">
    <property type="protein sequence ID" value="CAA56214.1"/>
    <property type="molecule type" value="Genomic_DNA"/>
</dbReference>
<dbReference type="PIR" id="S60773">
    <property type="entry name" value="S60773"/>
</dbReference>
<dbReference type="RefSeq" id="WP_004222626.1">
    <property type="nucleotide sequence ID" value="NZ_WYAL01000016.1"/>
</dbReference>
<dbReference type="SMR" id="P45410"/>
<dbReference type="BioCyc" id="MetaCyc:MONOMER-17001"/>
<dbReference type="GO" id="GO:0008771">
    <property type="term" value="F:[citrate (pro-3S)-lyase] ligase activity"/>
    <property type="evidence" value="ECO:0007669"/>
    <property type="project" value="UniProtKB-EC"/>
</dbReference>
<dbReference type="GO" id="GO:0016747">
    <property type="term" value="F:acyltransferase activity, transferring groups other than amino-acyl groups"/>
    <property type="evidence" value="ECO:0007669"/>
    <property type="project" value="InterPro"/>
</dbReference>
<dbReference type="GO" id="GO:0005524">
    <property type="term" value="F:ATP binding"/>
    <property type="evidence" value="ECO:0007669"/>
    <property type="project" value="UniProtKB-KW"/>
</dbReference>
<dbReference type="GO" id="GO:0009058">
    <property type="term" value="P:biosynthetic process"/>
    <property type="evidence" value="ECO:0007669"/>
    <property type="project" value="InterPro"/>
</dbReference>
<dbReference type="CDD" id="cd02169">
    <property type="entry name" value="Citrate_lyase_ligase"/>
    <property type="match status" value="1"/>
</dbReference>
<dbReference type="FunFam" id="3.40.50.620:FF:000071">
    <property type="entry name" value="[Citrate [pro-3S]-lyase] ligase"/>
    <property type="match status" value="1"/>
</dbReference>
<dbReference type="Gene3D" id="3.40.630.30">
    <property type="match status" value="1"/>
</dbReference>
<dbReference type="Gene3D" id="3.40.50.620">
    <property type="entry name" value="HUPs"/>
    <property type="match status" value="1"/>
</dbReference>
<dbReference type="InterPro" id="IPR016181">
    <property type="entry name" value="Acyl_CoA_acyltransferase"/>
</dbReference>
<dbReference type="InterPro" id="IPR005216">
    <property type="entry name" value="Citrate_lyase_ligase"/>
</dbReference>
<dbReference type="InterPro" id="IPR013166">
    <property type="entry name" value="Citrate_lyase_ligase_C"/>
</dbReference>
<dbReference type="InterPro" id="IPR004821">
    <property type="entry name" value="Cyt_trans-like"/>
</dbReference>
<dbReference type="InterPro" id="IPR000182">
    <property type="entry name" value="GNAT_dom"/>
</dbReference>
<dbReference type="InterPro" id="IPR014729">
    <property type="entry name" value="Rossmann-like_a/b/a_fold"/>
</dbReference>
<dbReference type="NCBIfam" id="TIGR00124">
    <property type="entry name" value="cit_ly_ligase"/>
    <property type="match status" value="1"/>
</dbReference>
<dbReference type="NCBIfam" id="TIGR00125">
    <property type="entry name" value="cyt_tran_rel"/>
    <property type="match status" value="1"/>
</dbReference>
<dbReference type="PANTHER" id="PTHR40599">
    <property type="entry name" value="[CITRATE [PRO-3S]-LYASE] LIGASE"/>
    <property type="match status" value="1"/>
</dbReference>
<dbReference type="PANTHER" id="PTHR40599:SF1">
    <property type="entry name" value="[CITRATE [PRO-3S]-LYASE] LIGASE"/>
    <property type="match status" value="1"/>
</dbReference>
<dbReference type="Pfam" id="PF00583">
    <property type="entry name" value="Acetyltransf_1"/>
    <property type="match status" value="1"/>
</dbReference>
<dbReference type="Pfam" id="PF08218">
    <property type="entry name" value="Citrate_ly_lig"/>
    <property type="match status" value="1"/>
</dbReference>
<dbReference type="PIRSF" id="PIRSF005751">
    <property type="entry name" value="Acet_citr_lig"/>
    <property type="match status" value="1"/>
</dbReference>
<dbReference type="SMART" id="SM00764">
    <property type="entry name" value="Citrate_ly_lig"/>
    <property type="match status" value="1"/>
</dbReference>
<dbReference type="SUPFAM" id="SSF55729">
    <property type="entry name" value="Acyl-CoA N-acyltransferases (Nat)"/>
    <property type="match status" value="1"/>
</dbReference>
<dbReference type="SUPFAM" id="SSF52374">
    <property type="entry name" value="Nucleotidylyl transferase"/>
    <property type="match status" value="1"/>
</dbReference>
<dbReference type="PROSITE" id="PS51186">
    <property type="entry name" value="GNAT"/>
    <property type="match status" value="1"/>
</dbReference>
<protein>
    <recommendedName>
        <fullName>[Citrate [pro-3S]-lyase] ligase</fullName>
        <ecNumber>6.2.1.22</ecNumber>
    </recommendedName>
    <alternativeName>
        <fullName>Acetate:SH-citrate lyase ligase</fullName>
    </alternativeName>
    <alternativeName>
        <fullName>Citrate lyase synthetase</fullName>
    </alternativeName>
</protein>
<name>CITC_KLEPN</name>
<reference key="1">
    <citation type="journal article" date="1994" name="Mol. Microbiol.">
        <title>Klebsiella pneumoniae genes for citrate lyase and citrate lyase ligase: localization, sequencing, and expression.</title>
        <authorList>
            <person name="Bott M."/>
            <person name="Dimroth P."/>
        </authorList>
    </citation>
    <scope>NUCLEOTIDE SEQUENCE [GENOMIC DNA]</scope>
    <source>
        <strain>ATCC 13882 / NBRC 13541 / NCTC 8172</strain>
    </source>
</reference>